<feature type="chain" id="PRO_0000057634" description="UPF0282 protein PYRAB09800">
    <location>
        <begin position="1"/>
        <end position="308"/>
    </location>
</feature>
<gene>
    <name type="ordered locus">PYRAB09800</name>
    <name type="ORF">PAB1721</name>
</gene>
<comment type="similarity">
    <text evidence="1">Belongs to the UPF0282 family.</text>
</comment>
<evidence type="ECO:0000255" key="1">
    <source>
        <dbReference type="HAMAP-Rule" id="MF_01406"/>
    </source>
</evidence>
<reference key="1">
    <citation type="journal article" date="2003" name="Mol. Microbiol.">
        <title>An integrated analysis of the genome of the hyperthermophilic archaeon Pyrococcus abyssi.</title>
        <authorList>
            <person name="Cohen G.N."/>
            <person name="Barbe V."/>
            <person name="Flament D."/>
            <person name="Galperin M."/>
            <person name="Heilig R."/>
            <person name="Lecompte O."/>
            <person name="Poch O."/>
            <person name="Prieur D."/>
            <person name="Querellou J."/>
            <person name="Ripp R."/>
            <person name="Thierry J.-C."/>
            <person name="Van der Oost J."/>
            <person name="Weissenbach J."/>
            <person name="Zivanovic Y."/>
            <person name="Forterre P."/>
        </authorList>
    </citation>
    <scope>NUCLEOTIDE SEQUENCE [LARGE SCALE GENOMIC DNA]</scope>
    <source>
        <strain>GE5 / Orsay</strain>
    </source>
</reference>
<reference key="2">
    <citation type="journal article" date="2012" name="Curr. Microbiol.">
        <title>Re-annotation of two hyperthermophilic archaea Pyrococcus abyssi GE5 and Pyrococcus furiosus DSM 3638.</title>
        <authorList>
            <person name="Gao J."/>
            <person name="Wang J."/>
        </authorList>
    </citation>
    <scope>GENOME REANNOTATION</scope>
    <source>
        <strain>GE5 / Orsay</strain>
    </source>
</reference>
<dbReference type="EMBL" id="AJ248286">
    <property type="protein sequence ID" value="CAB49888.1"/>
    <property type="molecule type" value="Genomic_DNA"/>
</dbReference>
<dbReference type="EMBL" id="HE613800">
    <property type="protein sequence ID" value="CCE70386.1"/>
    <property type="molecule type" value="Genomic_DNA"/>
</dbReference>
<dbReference type="PIR" id="C75073">
    <property type="entry name" value="C75073"/>
</dbReference>
<dbReference type="RefSeq" id="WP_010868097.1">
    <property type="nucleotide sequence ID" value="NC_000868.1"/>
</dbReference>
<dbReference type="STRING" id="272844.PAB1721"/>
<dbReference type="KEGG" id="pab:PAB1721"/>
<dbReference type="PATRIC" id="fig|272844.11.peg.1032"/>
<dbReference type="eggNOG" id="arCOG00969">
    <property type="taxonomic scope" value="Archaea"/>
</dbReference>
<dbReference type="HOGENOM" id="CLU_079268_0_0_2"/>
<dbReference type="OrthoDB" id="21331at2157"/>
<dbReference type="PhylomeDB" id="Q9V018"/>
<dbReference type="Proteomes" id="UP000000810">
    <property type="component" value="Chromosome"/>
</dbReference>
<dbReference type="Proteomes" id="UP000009139">
    <property type="component" value="Chromosome"/>
</dbReference>
<dbReference type="Gene3D" id="3.60.15.10">
    <property type="entry name" value="Ribonuclease Z/Hydroxyacylglutathione hydrolase-like"/>
    <property type="match status" value="1"/>
</dbReference>
<dbReference type="HAMAP" id="MF_01406">
    <property type="entry name" value="UPF0282"/>
    <property type="match status" value="1"/>
</dbReference>
<dbReference type="InterPro" id="IPR036866">
    <property type="entry name" value="RibonucZ/Hydroxyglut_hydro"/>
</dbReference>
<dbReference type="InterPro" id="IPR050114">
    <property type="entry name" value="UPF0173_UPF0282_UlaG_hydrolase"/>
</dbReference>
<dbReference type="InterPro" id="IPR014426">
    <property type="entry name" value="UPF0282_hydrls"/>
</dbReference>
<dbReference type="NCBIfam" id="NF003290">
    <property type="entry name" value="PRK04286.1-6"/>
    <property type="match status" value="1"/>
</dbReference>
<dbReference type="PANTHER" id="PTHR43546">
    <property type="entry name" value="UPF0173 METAL-DEPENDENT HYDROLASE MJ1163-RELATED"/>
    <property type="match status" value="1"/>
</dbReference>
<dbReference type="PANTHER" id="PTHR43546:SF4">
    <property type="entry name" value="UPF0282 PROTEIN MJ1629"/>
    <property type="match status" value="1"/>
</dbReference>
<dbReference type="PIRSF" id="PIRSF004944">
    <property type="entry name" value="UCP004944_hydrls"/>
    <property type="match status" value="1"/>
</dbReference>
<dbReference type="SUPFAM" id="SSF56281">
    <property type="entry name" value="Metallo-hydrolase/oxidoreductase"/>
    <property type="match status" value="1"/>
</dbReference>
<name>Y980_PYRAB</name>
<protein>
    <recommendedName>
        <fullName evidence="1">UPF0282 protein PYRAB09800</fullName>
    </recommendedName>
</protein>
<proteinExistence type="inferred from homology"/>
<organism>
    <name type="scientific">Pyrococcus abyssi (strain GE5 / Orsay)</name>
    <dbReference type="NCBI Taxonomy" id="272844"/>
    <lineage>
        <taxon>Archaea</taxon>
        <taxon>Methanobacteriati</taxon>
        <taxon>Methanobacteriota</taxon>
        <taxon>Thermococci</taxon>
        <taxon>Thermococcales</taxon>
        <taxon>Thermococcaceae</taxon>
        <taxon>Pyrococcus</taxon>
    </lineage>
</organism>
<sequence>MKIIPLASESLGVRSLALFLRIGKVGILIDPGVALGPKRYSLPPAQAEMKALAVAREKIQEYAKKAQIVTISHYHYDHHTPFFEGLYESSSIEKAKEIYTGKILLIKHPQENINHSQRKRAQEFLKNAREIAREISSADSKTFDFGEFIIEFSPPVPHGREGSKLGYVVMTLVDDGKTRIVHASDSQLINDRAIDWIIEKNPDILIAGGPPTYLSYRVGNVREVGIKNINRIIAETNAKLVIDHHVVRDKNYENFFQELDKTPQTFAEFLGVKSAPLEAYRKELHKLEKGEDVELPKGIQKFLKGLPP</sequence>
<accession>Q9V018</accession>
<accession>G8ZIE5</accession>